<name>ATPG_CAMFF</name>
<proteinExistence type="inferred from homology"/>
<protein>
    <recommendedName>
        <fullName evidence="1">ATP synthase gamma chain</fullName>
    </recommendedName>
    <alternativeName>
        <fullName evidence="1">ATP synthase F1 sector gamma subunit</fullName>
    </alternativeName>
    <alternativeName>
        <fullName evidence="1">F-ATPase gamma subunit</fullName>
    </alternativeName>
</protein>
<feature type="chain" id="PRO_1000053181" description="ATP synthase gamma chain">
    <location>
        <begin position="1"/>
        <end position="295"/>
    </location>
</feature>
<comment type="function">
    <text evidence="1">Produces ATP from ADP in the presence of a proton gradient across the membrane. The gamma chain is believed to be important in regulating ATPase activity and the flow of protons through the CF(0) complex.</text>
</comment>
<comment type="subunit">
    <text evidence="1">F-type ATPases have 2 components, CF(1) - the catalytic core - and CF(0) - the membrane proton channel. CF(1) has five subunits: alpha(3), beta(3), gamma(1), delta(1), epsilon(1). CF(0) has three main subunits: a, b and c.</text>
</comment>
<comment type="subcellular location">
    <subcellularLocation>
        <location evidence="1">Cell inner membrane</location>
        <topology evidence="1">Peripheral membrane protein</topology>
    </subcellularLocation>
</comment>
<comment type="similarity">
    <text evidence="1">Belongs to the ATPase gamma chain family.</text>
</comment>
<reference key="1">
    <citation type="submission" date="2006-11" db="EMBL/GenBank/DDBJ databases">
        <title>Sequence of Campylobacter fetus subsp. fetus 82-40.</title>
        <authorList>
            <person name="Fouts D.E."/>
            <person name="Nelson K.E."/>
        </authorList>
    </citation>
    <scope>NUCLEOTIDE SEQUENCE [LARGE SCALE GENOMIC DNA]</scope>
    <source>
        <strain>82-40</strain>
    </source>
</reference>
<gene>
    <name evidence="1" type="primary">atpG</name>
    <name type="ordered locus">CFF8240_1526</name>
</gene>
<sequence length="295" mass="33224">MSNLKDIKRKIKSVQNTQKTTKAMKLVSTAKLKKAEEAARHSRVYALKINEVLSEIAYKINQFKIVGKDDKFFDLKASINKVDIIFVTADKGLCGGFNISTIKTIRNMIEEYKSKKIKVRLRAVGKKGIEFFNFQGVEILESYKGISSAPTYDKAKGVIASAISDFVAGATDKVILVHNGYKNMISQEIRINTIVPVETPSIENVEHSSSLMEIEPENDEKILEELMKKYFEYSMYYALIDSLAAEHSARMQAMDNATNNAKARVKELQLAYNKARQESITTELIEIISGVESMK</sequence>
<dbReference type="EMBL" id="CP000487">
    <property type="protein sequence ID" value="ABK82342.1"/>
    <property type="molecule type" value="Genomic_DNA"/>
</dbReference>
<dbReference type="RefSeq" id="WP_002850541.1">
    <property type="nucleotide sequence ID" value="NC_008599.1"/>
</dbReference>
<dbReference type="SMR" id="A0RR27"/>
<dbReference type="GeneID" id="61065343"/>
<dbReference type="KEGG" id="cff:CFF8240_1526"/>
<dbReference type="eggNOG" id="COG0224">
    <property type="taxonomic scope" value="Bacteria"/>
</dbReference>
<dbReference type="HOGENOM" id="CLU_050669_0_1_7"/>
<dbReference type="Proteomes" id="UP000000760">
    <property type="component" value="Chromosome"/>
</dbReference>
<dbReference type="GO" id="GO:0005886">
    <property type="term" value="C:plasma membrane"/>
    <property type="evidence" value="ECO:0007669"/>
    <property type="project" value="UniProtKB-SubCell"/>
</dbReference>
<dbReference type="GO" id="GO:0045259">
    <property type="term" value="C:proton-transporting ATP synthase complex"/>
    <property type="evidence" value="ECO:0007669"/>
    <property type="project" value="UniProtKB-KW"/>
</dbReference>
<dbReference type="GO" id="GO:0005524">
    <property type="term" value="F:ATP binding"/>
    <property type="evidence" value="ECO:0007669"/>
    <property type="project" value="UniProtKB-UniRule"/>
</dbReference>
<dbReference type="GO" id="GO:0046933">
    <property type="term" value="F:proton-transporting ATP synthase activity, rotational mechanism"/>
    <property type="evidence" value="ECO:0007669"/>
    <property type="project" value="UniProtKB-UniRule"/>
</dbReference>
<dbReference type="GO" id="GO:0042777">
    <property type="term" value="P:proton motive force-driven plasma membrane ATP synthesis"/>
    <property type="evidence" value="ECO:0007669"/>
    <property type="project" value="UniProtKB-UniRule"/>
</dbReference>
<dbReference type="CDD" id="cd12151">
    <property type="entry name" value="F1-ATPase_gamma"/>
    <property type="match status" value="1"/>
</dbReference>
<dbReference type="FunFam" id="3.40.1380.10:FF:000006">
    <property type="entry name" value="ATP synthase gamma chain"/>
    <property type="match status" value="1"/>
</dbReference>
<dbReference type="Gene3D" id="3.40.1380.10">
    <property type="match status" value="1"/>
</dbReference>
<dbReference type="Gene3D" id="1.10.287.80">
    <property type="entry name" value="ATP synthase, gamma subunit, helix hairpin domain"/>
    <property type="match status" value="2"/>
</dbReference>
<dbReference type="HAMAP" id="MF_00815">
    <property type="entry name" value="ATP_synth_gamma_bact"/>
    <property type="match status" value="1"/>
</dbReference>
<dbReference type="InterPro" id="IPR035968">
    <property type="entry name" value="ATP_synth_F1_ATPase_gsu"/>
</dbReference>
<dbReference type="InterPro" id="IPR000131">
    <property type="entry name" value="ATP_synth_F1_gsu"/>
</dbReference>
<dbReference type="NCBIfam" id="TIGR01146">
    <property type="entry name" value="ATPsyn_F1gamma"/>
    <property type="match status" value="1"/>
</dbReference>
<dbReference type="PANTHER" id="PTHR11693">
    <property type="entry name" value="ATP SYNTHASE GAMMA CHAIN"/>
    <property type="match status" value="1"/>
</dbReference>
<dbReference type="PANTHER" id="PTHR11693:SF22">
    <property type="entry name" value="ATP SYNTHASE SUBUNIT GAMMA, MITOCHONDRIAL"/>
    <property type="match status" value="1"/>
</dbReference>
<dbReference type="Pfam" id="PF00231">
    <property type="entry name" value="ATP-synt"/>
    <property type="match status" value="1"/>
</dbReference>
<dbReference type="PRINTS" id="PR00126">
    <property type="entry name" value="ATPASEGAMMA"/>
</dbReference>
<dbReference type="SUPFAM" id="SSF52943">
    <property type="entry name" value="ATP synthase (F1-ATPase), gamma subunit"/>
    <property type="match status" value="1"/>
</dbReference>
<organism>
    <name type="scientific">Campylobacter fetus subsp. fetus (strain 82-40)</name>
    <dbReference type="NCBI Taxonomy" id="360106"/>
    <lineage>
        <taxon>Bacteria</taxon>
        <taxon>Pseudomonadati</taxon>
        <taxon>Campylobacterota</taxon>
        <taxon>Epsilonproteobacteria</taxon>
        <taxon>Campylobacterales</taxon>
        <taxon>Campylobacteraceae</taxon>
        <taxon>Campylobacter</taxon>
    </lineage>
</organism>
<evidence type="ECO:0000255" key="1">
    <source>
        <dbReference type="HAMAP-Rule" id="MF_00815"/>
    </source>
</evidence>
<keyword id="KW-0066">ATP synthesis</keyword>
<keyword id="KW-0997">Cell inner membrane</keyword>
<keyword id="KW-1003">Cell membrane</keyword>
<keyword id="KW-0139">CF(1)</keyword>
<keyword id="KW-0375">Hydrogen ion transport</keyword>
<keyword id="KW-0406">Ion transport</keyword>
<keyword id="KW-0472">Membrane</keyword>
<keyword id="KW-0813">Transport</keyword>
<accession>A0RR27</accession>